<comment type="subcellular location">
    <subcellularLocation>
        <location evidence="2">Membrane</location>
        <topology evidence="2">Multi-pass membrane protein</topology>
    </subcellularLocation>
</comment>
<comment type="tissue specificity">
    <text>Highly expressed in white matter in myelinating shark brain.</text>
</comment>
<comment type="similarity">
    <text evidence="2">Belongs to the myelin proteolipid protein family.</text>
</comment>
<feature type="chain" id="PRO_0000159015" description="Proteolipid protein DM alpha">
    <location>
        <begin position="1"/>
        <end position="245"/>
    </location>
</feature>
<feature type="transmembrane region" description="Helical" evidence="1">
    <location>
        <begin position="19"/>
        <end position="35"/>
    </location>
</feature>
<feature type="transmembrane region" description="Helical" evidence="1">
    <location>
        <begin position="71"/>
        <end position="87"/>
    </location>
</feature>
<feature type="transmembrane region" description="Helical" evidence="1">
    <location>
        <begin position="117"/>
        <end position="133"/>
    </location>
</feature>
<feature type="transmembrane region" description="Helical" evidence="1">
    <location>
        <begin position="204"/>
        <end position="220"/>
    </location>
</feature>
<name>DMA_SQUAC</name>
<sequence length="245" mass="26910">MGCSECCVRCLGGVPYASLIATILCFVGVALFCGCGHEALTGTEKLIELYFSNDFMDYALLVNVIQVFQYIIYGTASFSFLYGVLLLAEGFYTTSAVKALFGEFRTTVCGRCVSATFIFLTYALGVTWMGVFAFSALPVYIYYTMWSTCQMVKYVTENGTGFDDICVDARQYGILPWNASPGKICGLSLAAVCNTSEFELTYHLFIATFAGAAATVIALLTYMMSSTYNYAVLKFLSRDDCCTKF</sequence>
<protein>
    <recommendedName>
        <fullName>Proteolipid protein DM alpha</fullName>
    </recommendedName>
</protein>
<organism>
    <name type="scientific">Squalus acanthias</name>
    <name type="common">Spiny dogfish</name>
    <dbReference type="NCBI Taxonomy" id="7797"/>
    <lineage>
        <taxon>Eukaryota</taxon>
        <taxon>Metazoa</taxon>
        <taxon>Chordata</taxon>
        <taxon>Craniata</taxon>
        <taxon>Vertebrata</taxon>
        <taxon>Chondrichthyes</taxon>
        <taxon>Elasmobranchii</taxon>
        <taxon>Squalomorphii</taxon>
        <taxon>Squaliformes</taxon>
        <taxon>Squalidae</taxon>
        <taxon>Squalus</taxon>
    </lineage>
</organism>
<keyword id="KW-0472">Membrane</keyword>
<keyword id="KW-0812">Transmembrane</keyword>
<keyword id="KW-1133">Transmembrane helix</keyword>
<accession>P36963</accession>
<evidence type="ECO:0000255" key="1"/>
<evidence type="ECO:0000305" key="2"/>
<dbReference type="EMBL" id="U02973">
    <property type="protein sequence ID" value="AAC59639.1"/>
    <property type="molecule type" value="mRNA"/>
</dbReference>
<dbReference type="PIR" id="I51323">
    <property type="entry name" value="I51323"/>
</dbReference>
<dbReference type="GO" id="GO:0043209">
    <property type="term" value="C:myelin sheath"/>
    <property type="evidence" value="ECO:0007669"/>
    <property type="project" value="TreeGrafter"/>
</dbReference>
<dbReference type="GO" id="GO:0005886">
    <property type="term" value="C:plasma membrane"/>
    <property type="evidence" value="ECO:0007669"/>
    <property type="project" value="TreeGrafter"/>
</dbReference>
<dbReference type="GO" id="GO:0019911">
    <property type="term" value="F:structural constituent of myelin sheath"/>
    <property type="evidence" value="ECO:0007669"/>
    <property type="project" value="TreeGrafter"/>
</dbReference>
<dbReference type="GO" id="GO:0061564">
    <property type="term" value="P:axon development"/>
    <property type="evidence" value="ECO:0007669"/>
    <property type="project" value="TreeGrafter"/>
</dbReference>
<dbReference type="GO" id="GO:0022010">
    <property type="term" value="P:central nervous system myelination"/>
    <property type="evidence" value="ECO:0007669"/>
    <property type="project" value="TreeGrafter"/>
</dbReference>
<dbReference type="InterPro" id="IPR001614">
    <property type="entry name" value="Myelin_PLP"/>
</dbReference>
<dbReference type="InterPro" id="IPR018237">
    <property type="entry name" value="Myelin_PLP_CS"/>
</dbReference>
<dbReference type="PANTHER" id="PTHR11683:SF17">
    <property type="entry name" value="DMALPHA1"/>
    <property type="match status" value="1"/>
</dbReference>
<dbReference type="PANTHER" id="PTHR11683">
    <property type="entry name" value="MYELIN PROTEOLIPID"/>
    <property type="match status" value="1"/>
</dbReference>
<dbReference type="Pfam" id="PF01275">
    <property type="entry name" value="Myelin_PLP"/>
    <property type="match status" value="1"/>
</dbReference>
<dbReference type="PRINTS" id="PR00214">
    <property type="entry name" value="MYELINPLP"/>
</dbReference>
<dbReference type="SMART" id="SM00002">
    <property type="entry name" value="PLP"/>
    <property type="match status" value="1"/>
</dbReference>
<dbReference type="PROSITE" id="PS00575">
    <property type="entry name" value="MYELIN_PLP_1"/>
    <property type="match status" value="1"/>
</dbReference>
<dbReference type="PROSITE" id="PS01004">
    <property type="entry name" value="MYELIN_PLP_2"/>
    <property type="match status" value="1"/>
</dbReference>
<reference key="1">
    <citation type="journal article" date="1993" name="Neuron">
        <title>A proteolipid protein gene family: expression in sharks and rays and possible evolution from an ancestral gene encoding a pore-forming polypeptide.</title>
        <authorList>
            <person name="Kitagawa K."/>
            <person name="Sinoway M.P."/>
            <person name="Yang C."/>
            <person name="Gould R.M."/>
            <person name="Colman D.R."/>
        </authorList>
    </citation>
    <scope>NUCLEOTIDE SEQUENCE [MRNA]</scope>
    <source>
        <tissue>Brain</tissue>
    </source>
</reference>
<proteinExistence type="evidence at transcript level"/>